<reference key="1">
    <citation type="submission" date="2003-06" db="EMBL/GenBank/DDBJ databases">
        <title>The complete genome sequence of Haemophilus ducreyi.</title>
        <authorList>
            <person name="Munson R.S. Jr."/>
            <person name="Ray W.C."/>
            <person name="Mahairas G."/>
            <person name="Sabo P."/>
            <person name="Mungur R."/>
            <person name="Johnson L."/>
            <person name="Nguyen D."/>
            <person name="Wang J."/>
            <person name="Forst C."/>
            <person name="Hood L."/>
        </authorList>
    </citation>
    <scope>NUCLEOTIDE SEQUENCE [LARGE SCALE GENOMIC DNA]</scope>
    <source>
        <strain>35000HP / ATCC 700724</strain>
    </source>
</reference>
<gene>
    <name evidence="1" type="primary">nagZ</name>
    <name type="ordered locus">HD_0542</name>
</gene>
<keyword id="KW-0131">Cell cycle</keyword>
<keyword id="KW-0132">Cell division</keyword>
<keyword id="KW-0133">Cell shape</keyword>
<keyword id="KW-0961">Cell wall biogenesis/degradation</keyword>
<keyword id="KW-0963">Cytoplasm</keyword>
<keyword id="KW-0326">Glycosidase</keyword>
<keyword id="KW-0378">Hydrolase</keyword>
<keyword id="KW-0573">Peptidoglycan synthesis</keyword>
<keyword id="KW-1185">Reference proteome</keyword>
<dbReference type="EC" id="3.2.1.52" evidence="1"/>
<dbReference type="EMBL" id="AE017143">
    <property type="protein sequence ID" value="AAP95482.1"/>
    <property type="molecule type" value="Genomic_DNA"/>
</dbReference>
<dbReference type="RefSeq" id="WP_010944535.1">
    <property type="nucleotide sequence ID" value="NC_002940.2"/>
</dbReference>
<dbReference type="SMR" id="Q7VNI8"/>
<dbReference type="STRING" id="233412.HD_0542"/>
<dbReference type="CAZy" id="GH3">
    <property type="family name" value="Glycoside Hydrolase Family 3"/>
</dbReference>
<dbReference type="KEGG" id="hdu:HD_0542"/>
<dbReference type="eggNOG" id="COG1472">
    <property type="taxonomic scope" value="Bacteria"/>
</dbReference>
<dbReference type="HOGENOM" id="CLU_008392_0_0_6"/>
<dbReference type="OrthoDB" id="9786661at2"/>
<dbReference type="UniPathway" id="UPA00544"/>
<dbReference type="Proteomes" id="UP000001022">
    <property type="component" value="Chromosome"/>
</dbReference>
<dbReference type="GO" id="GO:0005737">
    <property type="term" value="C:cytoplasm"/>
    <property type="evidence" value="ECO:0007669"/>
    <property type="project" value="UniProtKB-SubCell"/>
</dbReference>
<dbReference type="GO" id="GO:0004563">
    <property type="term" value="F:beta-N-acetylhexosaminidase activity"/>
    <property type="evidence" value="ECO:0007669"/>
    <property type="project" value="UniProtKB-UniRule"/>
</dbReference>
<dbReference type="GO" id="GO:0005975">
    <property type="term" value="P:carbohydrate metabolic process"/>
    <property type="evidence" value="ECO:0007669"/>
    <property type="project" value="InterPro"/>
</dbReference>
<dbReference type="GO" id="GO:0051301">
    <property type="term" value="P:cell division"/>
    <property type="evidence" value="ECO:0007669"/>
    <property type="project" value="UniProtKB-KW"/>
</dbReference>
<dbReference type="GO" id="GO:0071555">
    <property type="term" value="P:cell wall organization"/>
    <property type="evidence" value="ECO:0007669"/>
    <property type="project" value="UniProtKB-KW"/>
</dbReference>
<dbReference type="GO" id="GO:0009252">
    <property type="term" value="P:peptidoglycan biosynthetic process"/>
    <property type="evidence" value="ECO:0007669"/>
    <property type="project" value="UniProtKB-KW"/>
</dbReference>
<dbReference type="GO" id="GO:0009254">
    <property type="term" value="P:peptidoglycan turnover"/>
    <property type="evidence" value="ECO:0007669"/>
    <property type="project" value="UniProtKB-UniRule"/>
</dbReference>
<dbReference type="GO" id="GO:0008360">
    <property type="term" value="P:regulation of cell shape"/>
    <property type="evidence" value="ECO:0007669"/>
    <property type="project" value="UniProtKB-KW"/>
</dbReference>
<dbReference type="FunFam" id="3.20.20.300:FF:000001">
    <property type="entry name" value="Beta-hexosaminidase"/>
    <property type="match status" value="1"/>
</dbReference>
<dbReference type="Gene3D" id="3.20.20.300">
    <property type="entry name" value="Glycoside hydrolase, family 3, N-terminal domain"/>
    <property type="match status" value="1"/>
</dbReference>
<dbReference type="HAMAP" id="MF_00364">
    <property type="entry name" value="NagZ"/>
    <property type="match status" value="1"/>
</dbReference>
<dbReference type="InterPro" id="IPR022956">
    <property type="entry name" value="Beta_hexosaminidase_bac"/>
</dbReference>
<dbReference type="InterPro" id="IPR019800">
    <property type="entry name" value="Glyco_hydro_3_AS"/>
</dbReference>
<dbReference type="InterPro" id="IPR001764">
    <property type="entry name" value="Glyco_hydro_3_N"/>
</dbReference>
<dbReference type="InterPro" id="IPR036962">
    <property type="entry name" value="Glyco_hydro_3_N_sf"/>
</dbReference>
<dbReference type="InterPro" id="IPR017853">
    <property type="entry name" value="Glycoside_hydrolase_SF"/>
</dbReference>
<dbReference type="InterPro" id="IPR050226">
    <property type="entry name" value="NagZ_Beta-hexosaminidase"/>
</dbReference>
<dbReference type="NCBIfam" id="NF003740">
    <property type="entry name" value="PRK05337.1"/>
    <property type="match status" value="1"/>
</dbReference>
<dbReference type="PANTHER" id="PTHR30480:SF13">
    <property type="entry name" value="BETA-HEXOSAMINIDASE"/>
    <property type="match status" value="1"/>
</dbReference>
<dbReference type="PANTHER" id="PTHR30480">
    <property type="entry name" value="BETA-HEXOSAMINIDASE-RELATED"/>
    <property type="match status" value="1"/>
</dbReference>
<dbReference type="Pfam" id="PF00933">
    <property type="entry name" value="Glyco_hydro_3"/>
    <property type="match status" value="1"/>
</dbReference>
<dbReference type="SUPFAM" id="SSF51445">
    <property type="entry name" value="(Trans)glycosidases"/>
    <property type="match status" value="1"/>
</dbReference>
<dbReference type="PROSITE" id="PS00775">
    <property type="entry name" value="GLYCOSYL_HYDROL_F3"/>
    <property type="match status" value="1"/>
</dbReference>
<proteinExistence type="inferred from homology"/>
<evidence type="ECO:0000255" key="1">
    <source>
        <dbReference type="HAMAP-Rule" id="MF_00364"/>
    </source>
</evidence>
<accession>Q7VNI8</accession>
<organism>
    <name type="scientific">Haemophilus ducreyi (strain 35000HP / ATCC 700724)</name>
    <dbReference type="NCBI Taxonomy" id="233412"/>
    <lineage>
        <taxon>Bacteria</taxon>
        <taxon>Pseudomonadati</taxon>
        <taxon>Pseudomonadota</taxon>
        <taxon>Gammaproteobacteria</taxon>
        <taxon>Pasteurellales</taxon>
        <taxon>Pasteurellaceae</taxon>
        <taxon>Haemophilus</taxon>
    </lineage>
</organism>
<feature type="chain" id="PRO_0000210788" description="Beta-hexosaminidase">
    <location>
        <begin position="1"/>
        <end position="344"/>
    </location>
</feature>
<feature type="active site" description="Proton donor/acceptor" evidence="1">
    <location>
        <position position="175"/>
    </location>
</feature>
<feature type="active site" description="Nucleophile" evidence="1">
    <location>
        <position position="247"/>
    </location>
</feature>
<feature type="binding site" evidence="1">
    <location>
        <position position="60"/>
    </location>
    <ligand>
        <name>substrate</name>
    </ligand>
</feature>
<feature type="binding site" evidence="1">
    <location>
        <position position="68"/>
    </location>
    <ligand>
        <name>substrate</name>
    </ligand>
</feature>
<feature type="binding site" evidence="1">
    <location>
        <position position="132"/>
    </location>
    <ligand>
        <name>substrate</name>
    </ligand>
</feature>
<feature type="binding site" evidence="1">
    <location>
        <begin position="162"/>
        <end position="163"/>
    </location>
    <ligand>
        <name>substrate</name>
    </ligand>
</feature>
<feature type="site" description="Important for catalytic activity" evidence="1">
    <location>
        <position position="173"/>
    </location>
</feature>
<comment type="function">
    <text evidence="1">Plays a role in peptidoglycan recycling by cleaving the terminal beta-1,4-linked N-acetylglucosamine (GlcNAc) from peptide-linked peptidoglycan fragments, giving rise to free GlcNAc, anhydro-N-acetylmuramic acid and anhydro-N-acetylmuramic acid-linked peptides.</text>
</comment>
<comment type="catalytic activity">
    <reaction evidence="1">
        <text>Hydrolysis of terminal non-reducing N-acetyl-D-hexosamine residues in N-acetyl-beta-D-hexosaminides.</text>
        <dbReference type="EC" id="3.2.1.52"/>
    </reaction>
</comment>
<comment type="pathway">
    <text evidence="1">Cell wall biogenesis; peptidoglycan recycling.</text>
</comment>
<comment type="subcellular location">
    <subcellularLocation>
        <location evidence="1">Cytoplasm</location>
    </subcellularLocation>
</comment>
<comment type="similarity">
    <text evidence="1">Belongs to the glycosyl hydrolase 3 family. NagZ subfamily.</text>
</comment>
<protein>
    <recommendedName>
        <fullName evidence="1">Beta-hexosaminidase</fullName>
        <ecNumber evidence="1">3.2.1.52</ecNumber>
    </recommendedName>
    <alternativeName>
        <fullName evidence="1">Beta-N-acetylhexosaminidase</fullName>
    </alternativeName>
    <alternativeName>
        <fullName evidence="1">N-acetyl-beta-glucosaminidase</fullName>
    </alternativeName>
</protein>
<sequence length="344" mass="38985">MLIIDIKGTEISQQEIEILSHPLVAGLILFSRNFVDKAQLTALIKEIRQKVTKPLLITIDQEGGRVQRFREGFTRLPAMQAFGQLAKHPQEAIIWAKQAGWLMAAEMFALDIDLSFAPVLDLGHKCKAIGDRSFGEKVTQILPIAEGFIDGMREIGMATTGKHFPGHGQVIADSHLETPFDERAKANIFNYDIQPFEYFIAKNKLSAIMPAHVVYTQCDPHPASGSTYWLQQVLRQQLQFKGIIFSDDLGMQGANLMGNFLQRSEQAINAGCDLLLLCNQPEGVIEVLNGLTYQPNKLEQQKYLTLKKRRTIDFQQLASSPRYQQTKQHLEQLHECWLEWQTTH</sequence>
<name>NAGZ_HAEDU</name>